<reference key="1">
    <citation type="journal article" date="1999" name="Genomics">
        <title>TTID: a novel gene at 5q31 encoding a protein with titin-like features.</title>
        <authorList>
            <person name="Godley L.A."/>
            <person name="Lai F."/>
            <person name="Liu J."/>
            <person name="Zhao N."/>
            <person name="Le Beau M.M."/>
        </authorList>
    </citation>
    <scope>NUCLEOTIDE SEQUENCE [MRNA] (ISOFORM 1)</scope>
    <scope>TISSUE SPECIFICITY</scope>
    <scope>VARIANT GLN-74</scope>
    <source>
        <tissue>Bone marrow</tissue>
    </source>
</reference>
<reference key="2">
    <citation type="journal article" date="1999" name="Hum. Mol. Genet.">
        <title>Myotilin, a novel sarcomeric protein with two Ig-like domains, is encoded by a candidate gene for limb-girdle muscular dystrophy.</title>
        <authorList>
            <person name="Salmikangas P."/>
            <person name="Mykkaenen O.M."/>
            <person name="Groenholm M."/>
            <person name="Heiska L."/>
            <person name="Kere J."/>
            <person name="Carpen O."/>
        </authorList>
    </citation>
    <scope>NUCLEOTIDE SEQUENCE [MRNA] (ISOFORM 1)</scope>
    <scope>SUBUNIT</scope>
    <scope>INTERACTION WITH ACTN1</scope>
    <scope>SUBCELLULAR LOCATION</scope>
    <scope>TISSUE SPECIFICITY</scope>
    <scope>VARIANT GLN-74</scope>
    <source>
        <tissue>Skeletal muscle</tissue>
    </source>
</reference>
<reference key="3">
    <citation type="journal article" date="2004" name="Nat. Genet.">
        <title>Complete sequencing and characterization of 21,243 full-length human cDNAs.</title>
        <authorList>
            <person name="Ota T."/>
            <person name="Suzuki Y."/>
            <person name="Nishikawa T."/>
            <person name="Otsuki T."/>
            <person name="Sugiyama T."/>
            <person name="Irie R."/>
            <person name="Wakamatsu A."/>
            <person name="Hayashi K."/>
            <person name="Sato H."/>
            <person name="Nagai K."/>
            <person name="Kimura K."/>
            <person name="Makita H."/>
            <person name="Sekine M."/>
            <person name="Obayashi M."/>
            <person name="Nishi T."/>
            <person name="Shibahara T."/>
            <person name="Tanaka T."/>
            <person name="Ishii S."/>
            <person name="Yamamoto J."/>
            <person name="Saito K."/>
            <person name="Kawai Y."/>
            <person name="Isono Y."/>
            <person name="Nakamura Y."/>
            <person name="Nagahari K."/>
            <person name="Murakami K."/>
            <person name="Yasuda T."/>
            <person name="Iwayanagi T."/>
            <person name="Wagatsuma M."/>
            <person name="Shiratori A."/>
            <person name="Sudo H."/>
            <person name="Hosoiri T."/>
            <person name="Kaku Y."/>
            <person name="Kodaira H."/>
            <person name="Kondo H."/>
            <person name="Sugawara M."/>
            <person name="Takahashi M."/>
            <person name="Kanda K."/>
            <person name="Yokoi T."/>
            <person name="Furuya T."/>
            <person name="Kikkawa E."/>
            <person name="Omura Y."/>
            <person name="Abe K."/>
            <person name="Kamihara K."/>
            <person name="Katsuta N."/>
            <person name="Sato K."/>
            <person name="Tanikawa M."/>
            <person name="Yamazaki M."/>
            <person name="Ninomiya K."/>
            <person name="Ishibashi T."/>
            <person name="Yamashita H."/>
            <person name="Murakawa K."/>
            <person name="Fujimori K."/>
            <person name="Tanai H."/>
            <person name="Kimata M."/>
            <person name="Watanabe M."/>
            <person name="Hiraoka S."/>
            <person name="Chiba Y."/>
            <person name="Ishida S."/>
            <person name="Ono Y."/>
            <person name="Takiguchi S."/>
            <person name="Watanabe S."/>
            <person name="Yosida M."/>
            <person name="Hotuta T."/>
            <person name="Kusano J."/>
            <person name="Kanehori K."/>
            <person name="Takahashi-Fujii A."/>
            <person name="Hara H."/>
            <person name="Tanase T.-O."/>
            <person name="Nomura Y."/>
            <person name="Togiya S."/>
            <person name="Komai F."/>
            <person name="Hara R."/>
            <person name="Takeuchi K."/>
            <person name="Arita M."/>
            <person name="Imose N."/>
            <person name="Musashino K."/>
            <person name="Yuuki H."/>
            <person name="Oshima A."/>
            <person name="Sasaki N."/>
            <person name="Aotsuka S."/>
            <person name="Yoshikawa Y."/>
            <person name="Matsunawa H."/>
            <person name="Ichihara T."/>
            <person name="Shiohata N."/>
            <person name="Sano S."/>
            <person name="Moriya S."/>
            <person name="Momiyama H."/>
            <person name="Satoh N."/>
            <person name="Takami S."/>
            <person name="Terashima Y."/>
            <person name="Suzuki O."/>
            <person name="Nakagawa S."/>
            <person name="Senoh A."/>
            <person name="Mizoguchi H."/>
            <person name="Goto Y."/>
            <person name="Shimizu F."/>
            <person name="Wakebe H."/>
            <person name="Hishigaki H."/>
            <person name="Watanabe T."/>
            <person name="Sugiyama A."/>
            <person name="Takemoto M."/>
            <person name="Kawakami B."/>
            <person name="Yamazaki M."/>
            <person name="Watanabe K."/>
            <person name="Kumagai A."/>
            <person name="Itakura S."/>
            <person name="Fukuzumi Y."/>
            <person name="Fujimori Y."/>
            <person name="Komiyama M."/>
            <person name="Tashiro H."/>
            <person name="Tanigami A."/>
            <person name="Fujiwara T."/>
            <person name="Ono T."/>
            <person name="Yamada K."/>
            <person name="Fujii Y."/>
            <person name="Ozaki K."/>
            <person name="Hirao M."/>
            <person name="Ohmori Y."/>
            <person name="Kawabata A."/>
            <person name="Hikiji T."/>
            <person name="Kobatake N."/>
            <person name="Inagaki H."/>
            <person name="Ikema Y."/>
            <person name="Okamoto S."/>
            <person name="Okitani R."/>
            <person name="Kawakami T."/>
            <person name="Noguchi S."/>
            <person name="Itoh T."/>
            <person name="Shigeta K."/>
            <person name="Senba T."/>
            <person name="Matsumura K."/>
            <person name="Nakajima Y."/>
            <person name="Mizuno T."/>
            <person name="Morinaga M."/>
            <person name="Sasaki M."/>
            <person name="Togashi T."/>
            <person name="Oyama M."/>
            <person name="Hata H."/>
            <person name="Watanabe M."/>
            <person name="Komatsu T."/>
            <person name="Mizushima-Sugano J."/>
            <person name="Satoh T."/>
            <person name="Shirai Y."/>
            <person name="Takahashi Y."/>
            <person name="Nakagawa K."/>
            <person name="Okumura K."/>
            <person name="Nagase T."/>
            <person name="Nomura N."/>
            <person name="Kikuchi H."/>
            <person name="Masuho Y."/>
            <person name="Yamashita R."/>
            <person name="Nakai K."/>
            <person name="Yada T."/>
            <person name="Nakamura Y."/>
            <person name="Ohara O."/>
            <person name="Isogai T."/>
            <person name="Sugano S."/>
        </authorList>
    </citation>
    <scope>NUCLEOTIDE SEQUENCE [LARGE SCALE MRNA] (ISOFORM 2)</scope>
    <source>
        <tissue>Pericardium</tissue>
    </source>
</reference>
<reference key="4">
    <citation type="journal article" date="2004" name="Nature">
        <title>The DNA sequence and comparative analysis of human chromosome 5.</title>
        <authorList>
            <person name="Schmutz J."/>
            <person name="Martin J."/>
            <person name="Terry A."/>
            <person name="Couronne O."/>
            <person name="Grimwood J."/>
            <person name="Lowry S."/>
            <person name="Gordon L.A."/>
            <person name="Scott D."/>
            <person name="Xie G."/>
            <person name="Huang W."/>
            <person name="Hellsten U."/>
            <person name="Tran-Gyamfi M."/>
            <person name="She X."/>
            <person name="Prabhakar S."/>
            <person name="Aerts A."/>
            <person name="Altherr M."/>
            <person name="Bajorek E."/>
            <person name="Black S."/>
            <person name="Branscomb E."/>
            <person name="Caoile C."/>
            <person name="Challacombe J.F."/>
            <person name="Chan Y.M."/>
            <person name="Denys M."/>
            <person name="Detter J.C."/>
            <person name="Escobar J."/>
            <person name="Flowers D."/>
            <person name="Fotopulos D."/>
            <person name="Glavina T."/>
            <person name="Gomez M."/>
            <person name="Gonzales E."/>
            <person name="Goodstein D."/>
            <person name="Grigoriev I."/>
            <person name="Groza M."/>
            <person name="Hammon N."/>
            <person name="Hawkins T."/>
            <person name="Haydu L."/>
            <person name="Israni S."/>
            <person name="Jett J."/>
            <person name="Kadner K."/>
            <person name="Kimball H."/>
            <person name="Kobayashi A."/>
            <person name="Lopez F."/>
            <person name="Lou Y."/>
            <person name="Martinez D."/>
            <person name="Medina C."/>
            <person name="Morgan J."/>
            <person name="Nandkeshwar R."/>
            <person name="Noonan J.P."/>
            <person name="Pitluck S."/>
            <person name="Pollard M."/>
            <person name="Predki P."/>
            <person name="Priest J."/>
            <person name="Ramirez L."/>
            <person name="Retterer J."/>
            <person name="Rodriguez A."/>
            <person name="Rogers S."/>
            <person name="Salamov A."/>
            <person name="Salazar A."/>
            <person name="Thayer N."/>
            <person name="Tice H."/>
            <person name="Tsai M."/>
            <person name="Ustaszewska A."/>
            <person name="Vo N."/>
            <person name="Wheeler J."/>
            <person name="Wu K."/>
            <person name="Yang J."/>
            <person name="Dickson M."/>
            <person name="Cheng J.-F."/>
            <person name="Eichler E.E."/>
            <person name="Olsen A."/>
            <person name="Pennacchio L.A."/>
            <person name="Rokhsar D.S."/>
            <person name="Richardson P."/>
            <person name="Lucas S.M."/>
            <person name="Myers R.M."/>
            <person name="Rubin E.M."/>
        </authorList>
    </citation>
    <scope>NUCLEOTIDE SEQUENCE [LARGE SCALE GENOMIC DNA]</scope>
</reference>
<reference key="5">
    <citation type="journal article" date="2004" name="Genome Res.">
        <title>The status, quality, and expansion of the NIH full-length cDNA project: the Mammalian Gene Collection (MGC).</title>
        <authorList>
            <consortium name="The MGC Project Team"/>
        </authorList>
    </citation>
    <scope>NUCLEOTIDE SEQUENCE [LARGE SCALE MRNA] (ISOFORM 1)</scope>
    <scope>VARIANT GLN-74</scope>
    <source>
        <tissue>Liver</tissue>
    </source>
</reference>
<reference key="6">
    <citation type="journal article" date="2000" name="J. Cell Biol.">
        <title>Indications for a novel muscular dystrophy pathway: gamma-filamin, the muscle-specific filamin isoform, interacts with myotilin.</title>
        <authorList>
            <person name="van der Ven P.F.M."/>
            <person name="Wiesner S."/>
            <person name="Salmikangas P."/>
            <person name="Auerbach D."/>
            <person name="Himmel M."/>
            <person name="Kempa S."/>
            <person name="Hayess K."/>
            <person name="Pacholsky D."/>
            <person name="Taivainen A."/>
            <person name="Schroeder R."/>
            <person name="Carpen O."/>
            <person name="Fuerst D.O."/>
        </authorList>
    </citation>
    <scope>INTERACTION WITH FLNC</scope>
</reference>
<reference key="7">
    <citation type="journal article" date="2003" name="Hum. Mol. Genet.">
        <title>Myotilin, the limb-girdle muscular dystrophy 1A (LGMD1A) protein, cross-links actin filaments and controls sarcomere assembly.</title>
        <authorList>
            <person name="Salmikangas P."/>
            <person name="van der Ven P.F.M."/>
            <person name="Lalowski M."/>
            <person name="Taivainen A."/>
            <person name="Zhao F."/>
            <person name="Suila H."/>
            <person name="Schroeder R."/>
            <person name="Lappalainen P."/>
            <person name="Fuerst D.O."/>
            <person name="Carpen O."/>
        </authorList>
    </citation>
    <scope>FUNCTION IN MYOFIBRIL ASSEMBLY AND STABILITY</scope>
    <scope>SUBUNIT</scope>
    <scope>INTERACTION WITH ACTA1</scope>
</reference>
<reference key="8">
    <citation type="journal article" date="2005" name="J. Cell Sci.">
        <title>The Z-disc proteins myotilin and FATZ-1 interact with each other and are connected to the sarcolemma via muscle-specific filamins.</title>
        <authorList>
            <person name="Gontier Y."/>
            <person name="Taivainen A."/>
            <person name="Fontao L."/>
            <person name="Sonnenberg A."/>
            <person name="van der Flier A."/>
            <person name="Carpen O."/>
            <person name="Faulkner G."/>
            <person name="Borradori L."/>
        </authorList>
    </citation>
    <scope>INTERACTION WITH FLNA; FLNB; FLNC; MYOZ1 AND MYOZ2</scope>
    <scope>SUBCELLULAR LOCATION</scope>
</reference>
<reference key="9">
    <citation type="journal article" date="2009" name="J. Biomol. NMR">
        <title>Solution structure of the first immunoglobulin domain of human myotilin.</title>
        <authorList>
            <person name="Heikkinen O."/>
            <person name="Permi P."/>
            <person name="Koskela H."/>
            <person name="Carpen O."/>
            <person name="Ylaenne J."/>
            <person name="Kilpelaeinen I."/>
        </authorList>
    </citation>
    <scope>STRUCTURE BY NMR OF 249-344</scope>
</reference>
<reference key="10">
    <citation type="submission" date="2009-07" db="PDB data bank">
        <title>Solution NMR structure of the Ig-like C2-type 2 domain of human myotilin. Northeast structural genomics target HR3158.</title>
        <authorList>
            <consortium name="Northeast structural genomics consortium (NESG)"/>
        </authorList>
    </citation>
    <scope>STRUCTURE BY NMR OF 344-449</scope>
</reference>
<reference key="11">
    <citation type="journal article" date="2000" name="Hum. Mol. Genet.">
        <title>Myotilin is mutated in limb girdle muscular dystrophy 1A.</title>
        <authorList>
            <person name="Hauser M.A."/>
            <person name="Horrigan S.K."/>
            <person name="Salmikangas P."/>
            <person name="Torian U.M."/>
            <person name="Viles K.D."/>
            <person name="Dancel R."/>
            <person name="Tim R.W."/>
            <person name="Taivainen A."/>
            <person name="Bartoloni L."/>
            <person name="Gilchrist J.M."/>
            <person name="Stajich J.M."/>
            <person name="Gaskell P.C."/>
            <person name="Gilbert J.R."/>
            <person name="Vance J.M."/>
            <person name="Pericak-Vance M.A."/>
            <person name="Carpen O."/>
            <person name="Westbrook C.A."/>
            <person name="Speer M.C."/>
        </authorList>
    </citation>
    <scope>VARIANT MFM3 ILE-57</scope>
    <scope>INVOLVEMENT IN MFM3</scope>
    <scope>INTERACTION WITH ACTN1</scope>
</reference>
<reference key="12">
    <citation type="journal article" date="2002" name="Am. J. Hum. Genet.">
        <title>Myotilin mutation found in second pedigree with LGMD1A.</title>
        <authorList>
            <person name="Hauser M.A."/>
            <person name="Conde C.B."/>
            <person name="Kowaljow V."/>
            <person name="Zeppa G."/>
            <person name="Taratuto A.L."/>
            <person name="Torian U.M."/>
            <person name="Vance J.M."/>
            <person name="Pericak-Vance M.A."/>
            <person name="Speer M.C."/>
            <person name="Rosa A.L."/>
        </authorList>
    </citation>
    <scope>VARIANT MFM3 PHE-55</scope>
    <scope>INVOLVEMENT IN MFM3</scope>
</reference>
<reference key="13">
    <citation type="journal article" date="2004" name="Neurology">
        <title>Mutations in myotilin cause myofibrillar myopathy.</title>
        <authorList>
            <person name="Selcen D."/>
            <person name="Engel A.G."/>
        </authorList>
    </citation>
    <scope>VARIANTS MFM3 PHE-55; CYS-60; PHE-60 AND ILE-95</scope>
    <scope>INVOLVEMENT IN MFM3</scope>
</reference>
<reference key="14">
    <citation type="journal article" date="2004" name="Neurology">
        <authorList>
            <person name="Selcen D."/>
            <person name="Engel A.G."/>
        </authorList>
    </citation>
    <scope>ERRATUM OF PUBMED:15111675</scope>
</reference>
<reference key="15">
    <citation type="journal article" date="2005" name="Neurology">
        <title>A mutation in myotilin causes spheroid body myopathy.</title>
        <authorList>
            <person name="Foroud T."/>
            <person name="Pankratz N."/>
            <person name="Batchman A.P."/>
            <person name="Pauciulo M.W."/>
            <person name="Vidal R."/>
            <person name="Miravalle L."/>
            <person name="Goebel H.H."/>
            <person name="Cushman L.J."/>
            <person name="Azzarelli B."/>
            <person name="Horak H."/>
            <person name="Farlow M."/>
            <person name="Nichols W.C."/>
        </authorList>
    </citation>
    <scope>VARIANT MFM3 PHE-39</scope>
    <scope>INVOLVEMENT IN MFM3</scope>
</reference>
<reference key="16">
    <citation type="journal article" date="2006" name="Science">
        <title>The consensus coding sequences of human breast and colorectal cancers.</title>
        <authorList>
            <person name="Sjoeblom T."/>
            <person name="Jones S."/>
            <person name="Wood L.D."/>
            <person name="Parsons D.W."/>
            <person name="Lin J."/>
            <person name="Barber T.D."/>
            <person name="Mandelker D."/>
            <person name="Leary R.J."/>
            <person name="Ptak J."/>
            <person name="Silliman N."/>
            <person name="Szabo S."/>
            <person name="Buckhaults P."/>
            <person name="Farrell C."/>
            <person name="Meeh P."/>
            <person name="Markowitz S.D."/>
            <person name="Willis J."/>
            <person name="Dawson D."/>
            <person name="Willson J.K.V."/>
            <person name="Gazdar A.F."/>
            <person name="Hartigan J."/>
            <person name="Wu L."/>
            <person name="Liu C."/>
            <person name="Parmigiani G."/>
            <person name="Park B.H."/>
            <person name="Bachman K.E."/>
            <person name="Papadopoulos N."/>
            <person name="Vogelstein B."/>
            <person name="Kinzler K.W."/>
            <person name="Velculescu V.E."/>
        </authorList>
    </citation>
    <scope>VARIANT [LARGE SCALE ANALYSIS] ILE-33</scope>
</reference>
<reference key="17">
    <citation type="journal article" date="2014" name="Orphanet J. Rare Dis.">
        <title>Unusual multisystemic involvement and a novel BAG3 mutation revealed by NGS screening in a large cohort of myofibrillar myopathies.</title>
        <authorList>
            <person name="Semmler A.L."/>
            <person name="Sacconi S."/>
            <person name="Bach J.E."/>
            <person name="Liebe C."/>
            <person name="Buermann J."/>
            <person name="Kley R.A."/>
            <person name="Ferbert A."/>
            <person name="Anderheiden R."/>
            <person name="Van den Bergh P."/>
            <person name="Martin J.J."/>
            <person name="De Jonghe P."/>
            <person name="Neuen-Jacob E."/>
            <person name="Mueller O."/>
            <person name="Deschauer M."/>
            <person name="Bergmann M."/>
            <person name="Schroeder J.M."/>
            <person name="Vorgerd M."/>
            <person name="Schulz J.B."/>
            <person name="Weis J."/>
            <person name="Kress W."/>
            <person name="Claeys K.G."/>
        </authorList>
    </citation>
    <scope>VARIANTS MFM3 PHE-55 AND PHE-60</scope>
    <scope>INVOLVEMENT IN MFM3</scope>
</reference>
<gene>
    <name type="primary">MYOT</name>
    <name type="synonym">TTID</name>
</gene>
<name>MYOTI_HUMAN</name>
<sequence length="498" mass="55395">MFNYERPKHFIQSQNPCGSRLQPPGPETSSFSSQTKQSSIIIQPRQCTEQRFSASSTLSSHITMSSSAFPASPKQHAGSNPGQRVTTTYNQSPASFLSSILPSQPDYNSSKIPSAMDSNYQQSSAGQPINAKPSQTANAKPIPRTPDHEIQGSKEALIQDLERKLKCKDTLLHNGNQRLTYEEKMARRLLGPQNAAAVFQAQDDSGAQDSQQHNSEHARLQVPTSQVRSRSTSRGDVNDQDAIQEKFYPPRFIQVPENMSIDEGRFCRMDFKVSGLPAPDVSWYLNGRTVQSDDLHKMIVSEKGLHSLIFEVVRASDAGAYACVAKNRAGEATFTVQLDVLAKEHKRAPMFIYKPQSKKVLEGDSVKLECQISAIPPPKLFWKRNNEMVQFNTDRISLYQDNTGRVTLLIKDVNKKDAGWYTVSAVNEAGVTTCNTRLDVTARPNQTLPAPKQLRVRPTFSKYLALNGKGLNVKQAFNPEGEFQRLAAQSGLYESEEL</sequence>
<accession>Q9UBF9</accession>
<accession>A0A4R6</accession>
<accession>B4DT79</accession>
<comment type="function">
    <text evidence="8">Component of a complex of multiple actin cross-linking proteins. Involved in the control of myofibril assembly and stability at the Z lines in muscle cells.</text>
</comment>
<comment type="subunit">
    <text evidence="3 5 6 8 11">Homodimer. Interacts with ACTA1, ACTN1, FLNA, FLNB, FLNC and MYOZ2. Interacts with the C-terminal region of MYOZ1.</text>
</comment>
<comment type="interaction">
    <interactant intactId="EBI-296701">
        <id>Q9UBF9</id>
    </interactant>
    <interactant intactId="EBI-77797">
        <id>P35609</id>
        <label>ACTN2</label>
    </interactant>
    <organismsDiffer>false</organismsDiffer>
    <experiments>3</experiments>
</comment>
<comment type="interaction">
    <interactant intactId="EBI-296701">
        <id>Q9UBF9</id>
    </interactant>
    <interactant intactId="EBI-2880652">
        <id>Q08043</id>
        <label>ACTN3</label>
    </interactant>
    <organismsDiffer>false</organismsDiffer>
    <experiments>3</experiments>
</comment>
<comment type="interaction">
    <interactant intactId="EBI-296701">
        <id>Q9UBF9</id>
    </interactant>
    <interactant intactId="EBI-489954">
        <id>Q14315</id>
        <label>FLNC</label>
    </interactant>
    <organismsDiffer>false</organismsDiffer>
    <experiments>6</experiments>
</comment>
<comment type="interaction">
    <interactant intactId="EBI-296701">
        <id>Q9UBF9</id>
    </interactant>
    <interactant intactId="EBI-744782">
        <id>Q9Y5B8</id>
        <label>NME7</label>
    </interactant>
    <organismsDiffer>false</organismsDiffer>
    <experiments>3</experiments>
</comment>
<comment type="interaction">
    <interactant intactId="EBI-296701">
        <id>Q9UBF9</id>
    </interactant>
    <interactant intactId="EBI-357275">
        <id>Q99471</id>
        <label>PFDN5</label>
    </interactant>
    <organismsDiffer>false</organismsDiffer>
    <experiments>3</experiments>
</comment>
<comment type="subcellular location">
    <subcellularLocation>
        <location evidence="3">Cell membrane</location>
        <location evidence="3">Sarcolemma</location>
    </subcellularLocation>
    <subcellularLocation>
        <location evidence="3">Cytoplasm</location>
        <location evidence="3">Cytoskeleton</location>
    </subcellularLocation>
    <subcellularLocation>
        <location evidence="11">Cytoplasm</location>
        <location evidence="11">Myofibril</location>
        <location evidence="11">Sarcomere</location>
        <location evidence="11">Z line</location>
    </subcellularLocation>
    <text evidence="3 11">Sarcomeric, also localized to the sarcolemma (PubMed:10369880). Colocalizes with MYOZ1 at the Z-lines in skeletal muscle (PubMed:16076904).</text>
</comment>
<comment type="alternative products">
    <event type="alternative splicing"/>
    <isoform>
        <id>Q9UBF9-1</id>
        <name>1</name>
        <sequence type="displayed"/>
    </isoform>
    <isoform>
        <id>Q9UBF9-2</id>
        <name>2</name>
        <sequence type="described" ref="VSP_041450"/>
    </isoform>
</comment>
<comment type="tissue specificity">
    <text evidence="3 4">Expressed in skeletal muscle (at protein level). Expressed in skeletal muscle, heart, bone marrow and thyroid gland.</text>
</comment>
<comment type="disease" evidence="5 7 9 12 14">
    <disease id="DI-02022">
        <name>Myopathy, myofibrillar, 3</name>
        <acronym>MFM3</acronym>
        <description>A form of myofibrillar myopathy, a group of chronic neuromuscular disorders characterized at ultrastructural level by disintegration of the sarcomeric Z disk and myofibrils, and replacement of the normal myofibrillar markings by small dense granules, or larger hyaline masses, or amorphous material. MFM3 is characterized by progressive skeletal muscle weakness greater distally than proximally, tight heel cords, hyporeflexia, cardiomyopathy and peripheral neuropathy in some patients. Affected muscle exhibits disorganization and streaming of the Z-line, presence of large hyaline structures, excessive accumulation of myotilin and other ectopically expressed proteins and prominent congophilic deposits.</description>
        <dbReference type="MIM" id="609200"/>
    </disease>
    <text>The disease is caused by variants affecting the gene represented in this entry.</text>
</comment>
<comment type="similarity">
    <text evidence="16">Belongs to the myotilin/palladin family.</text>
</comment>
<dbReference type="EMBL" id="AF133820">
    <property type="protein sequence ID" value="AAD29051.2"/>
    <property type="molecule type" value="mRNA"/>
</dbReference>
<dbReference type="EMBL" id="AF144477">
    <property type="protein sequence ID" value="AAD44754.1"/>
    <property type="molecule type" value="mRNA"/>
</dbReference>
<dbReference type="EMBL" id="AK300088">
    <property type="protein sequence ID" value="BAG61891.1"/>
    <property type="molecule type" value="mRNA"/>
</dbReference>
<dbReference type="EMBL" id="AC106791">
    <property type="status" value="NOT_ANNOTATED_CDS"/>
    <property type="molecule type" value="Genomic_DNA"/>
</dbReference>
<dbReference type="EMBL" id="BC005376">
    <property type="protein sequence ID" value="AAH05376.1"/>
    <property type="molecule type" value="mRNA"/>
</dbReference>
<dbReference type="CCDS" id="CCDS4194.1">
    <molecule id="Q9UBF9-1"/>
</dbReference>
<dbReference type="CCDS" id="CCDS47268.1">
    <molecule id="Q9UBF9-2"/>
</dbReference>
<dbReference type="RefSeq" id="NP_001129412.1">
    <molecule id="Q9UBF9-2"/>
    <property type="nucleotide sequence ID" value="NM_001135940.2"/>
</dbReference>
<dbReference type="RefSeq" id="NP_001287840.1">
    <property type="nucleotide sequence ID" value="NM_001300911.1"/>
</dbReference>
<dbReference type="RefSeq" id="NP_006781.1">
    <property type="nucleotide sequence ID" value="NM_006790.2"/>
</dbReference>
<dbReference type="PDB" id="2KDG">
    <property type="method" value="NMR"/>
    <property type="chains" value="A=249-344"/>
</dbReference>
<dbReference type="PDB" id="2KKQ">
    <property type="method" value="NMR"/>
    <property type="chains" value="A=344-449"/>
</dbReference>
<dbReference type="PDBsum" id="2KDG"/>
<dbReference type="PDBsum" id="2KKQ"/>
<dbReference type="SASBDB" id="Q9UBF9"/>
<dbReference type="SMR" id="Q9UBF9"/>
<dbReference type="BioGRID" id="114878">
    <property type="interactions" value="19"/>
</dbReference>
<dbReference type="FunCoup" id="Q9UBF9">
    <property type="interactions" value="20"/>
</dbReference>
<dbReference type="IntAct" id="Q9UBF9">
    <property type="interactions" value="11"/>
</dbReference>
<dbReference type="STRING" id="9606.ENSP00000239926"/>
<dbReference type="GlyGen" id="Q9UBF9">
    <property type="glycosylation" value="1 site, 1 O-linked glycan (1 site)"/>
</dbReference>
<dbReference type="iPTMnet" id="Q9UBF9"/>
<dbReference type="PhosphoSitePlus" id="Q9UBF9"/>
<dbReference type="BioMuta" id="MYOT"/>
<dbReference type="DMDM" id="311033402"/>
<dbReference type="MassIVE" id="Q9UBF9"/>
<dbReference type="PaxDb" id="9606-ENSP00000239926"/>
<dbReference type="PeptideAtlas" id="Q9UBF9"/>
<dbReference type="ProteomicsDB" id="83962">
    <molecule id="Q9UBF9-1"/>
</dbReference>
<dbReference type="ProteomicsDB" id="83963">
    <molecule id="Q9UBF9-2"/>
</dbReference>
<dbReference type="Antibodypedia" id="26530">
    <property type="antibodies" value="271 antibodies from 30 providers"/>
</dbReference>
<dbReference type="DNASU" id="9499"/>
<dbReference type="Ensembl" id="ENST00000421631.6">
    <molecule id="Q9UBF9-2"/>
    <property type="protein sequence ID" value="ENSP00000391185.2"/>
    <property type="gene ID" value="ENSG00000120729.10"/>
</dbReference>
<dbReference type="GeneID" id="9499"/>
<dbReference type="KEGG" id="hsa:9499"/>
<dbReference type="UCSC" id="uc003lbv.4">
    <molecule id="Q9UBF9-1"/>
    <property type="organism name" value="human"/>
</dbReference>
<dbReference type="AGR" id="HGNC:12399"/>
<dbReference type="CTD" id="9499"/>
<dbReference type="DisGeNET" id="9499"/>
<dbReference type="GeneCards" id="MYOT"/>
<dbReference type="HGNC" id="HGNC:12399">
    <property type="gene designation" value="MYOT"/>
</dbReference>
<dbReference type="HPA" id="ENSG00000120729">
    <property type="expression patterns" value="Group enriched (skeletal muscle, tongue)"/>
</dbReference>
<dbReference type="MalaCards" id="MYOT"/>
<dbReference type="MIM" id="604103">
    <property type="type" value="gene"/>
</dbReference>
<dbReference type="MIM" id="609200">
    <property type="type" value="phenotype"/>
</dbReference>
<dbReference type="neXtProt" id="NX_Q9UBF9"/>
<dbReference type="OpenTargets" id="ENSG00000120729"/>
<dbReference type="Orphanet" id="266">
    <property type="disease" value="Autosomal dominant limb-girdle muscular dystrophy type 1A"/>
</dbReference>
<dbReference type="Orphanet" id="98911">
    <property type="disease" value="Distal myotilinopathy"/>
</dbReference>
<dbReference type="Orphanet" id="268129">
    <property type="disease" value="Spheroid body myopathy"/>
</dbReference>
<dbReference type="PharmGKB" id="PA37064"/>
<dbReference type="VEuPathDB" id="HostDB:ENSG00000120729"/>
<dbReference type="eggNOG" id="ENOG502QTWI">
    <property type="taxonomic scope" value="Eukaryota"/>
</dbReference>
<dbReference type="GeneTree" id="ENSGT00940000159795"/>
<dbReference type="HOGENOM" id="CLU_006487_0_0_1"/>
<dbReference type="InParanoid" id="Q9UBF9"/>
<dbReference type="OrthoDB" id="6612025at2759"/>
<dbReference type="PAN-GO" id="Q9UBF9">
    <property type="GO annotations" value="6 GO annotations based on evolutionary models"/>
</dbReference>
<dbReference type="PhylomeDB" id="Q9UBF9"/>
<dbReference type="PathwayCommons" id="Q9UBF9"/>
<dbReference type="SignaLink" id="Q9UBF9"/>
<dbReference type="BioGRID-ORCS" id="9499">
    <property type="hits" value="12 hits in 1147 CRISPR screens"/>
</dbReference>
<dbReference type="ChiTaRS" id="MYOT">
    <property type="organism name" value="human"/>
</dbReference>
<dbReference type="EvolutionaryTrace" id="Q9UBF9"/>
<dbReference type="GeneWiki" id="Myotilin"/>
<dbReference type="GenomeRNAi" id="9499"/>
<dbReference type="Pharos" id="Q9UBF9">
    <property type="development level" value="Tbio"/>
</dbReference>
<dbReference type="PRO" id="PR:Q9UBF9"/>
<dbReference type="Proteomes" id="UP000005640">
    <property type="component" value="Chromosome 5"/>
</dbReference>
<dbReference type="RNAct" id="Q9UBF9">
    <property type="molecule type" value="protein"/>
</dbReference>
<dbReference type="Bgee" id="ENSG00000120729">
    <property type="expression patterns" value="Expressed in hindlimb stylopod muscle and 108 other cell types or tissues"/>
</dbReference>
<dbReference type="ExpressionAtlas" id="Q9UBF9">
    <property type="expression patterns" value="baseline and differential"/>
</dbReference>
<dbReference type="GO" id="GO:0015629">
    <property type="term" value="C:actin cytoskeleton"/>
    <property type="evidence" value="ECO:0000304"/>
    <property type="project" value="ProtInc"/>
</dbReference>
<dbReference type="GO" id="GO:0030424">
    <property type="term" value="C:axon"/>
    <property type="evidence" value="ECO:0000318"/>
    <property type="project" value="GO_Central"/>
</dbReference>
<dbReference type="GO" id="GO:0043025">
    <property type="term" value="C:neuronal cell body"/>
    <property type="evidence" value="ECO:0000318"/>
    <property type="project" value="GO_Central"/>
</dbReference>
<dbReference type="GO" id="GO:0005886">
    <property type="term" value="C:plasma membrane"/>
    <property type="evidence" value="ECO:0000318"/>
    <property type="project" value="GO_Central"/>
</dbReference>
<dbReference type="GO" id="GO:0042383">
    <property type="term" value="C:sarcolemma"/>
    <property type="evidence" value="ECO:0007669"/>
    <property type="project" value="UniProtKB-SubCell"/>
</dbReference>
<dbReference type="GO" id="GO:0030018">
    <property type="term" value="C:Z disc"/>
    <property type="evidence" value="ECO:0000314"/>
    <property type="project" value="MGI"/>
</dbReference>
<dbReference type="GO" id="GO:0003779">
    <property type="term" value="F:actin binding"/>
    <property type="evidence" value="ECO:0007669"/>
    <property type="project" value="UniProtKB-KW"/>
</dbReference>
<dbReference type="GO" id="GO:0051393">
    <property type="term" value="F:alpha-actinin binding"/>
    <property type="evidence" value="ECO:0000314"/>
    <property type="project" value="MGI"/>
</dbReference>
<dbReference type="GO" id="GO:0008046">
    <property type="term" value="F:axon guidance receptor activity"/>
    <property type="evidence" value="ECO:0000318"/>
    <property type="project" value="GO_Central"/>
</dbReference>
<dbReference type="GO" id="GO:0008307">
    <property type="term" value="F:structural constituent of muscle"/>
    <property type="evidence" value="ECO:0000304"/>
    <property type="project" value="ProtInc"/>
</dbReference>
<dbReference type="GO" id="GO:0007156">
    <property type="term" value="P:homophilic cell adhesion via plasma membrane adhesion molecules"/>
    <property type="evidence" value="ECO:0000318"/>
    <property type="project" value="GO_Central"/>
</dbReference>
<dbReference type="GO" id="GO:0006936">
    <property type="term" value="P:muscle contraction"/>
    <property type="evidence" value="ECO:0000304"/>
    <property type="project" value="ProtInc"/>
</dbReference>
<dbReference type="GO" id="GO:0050808">
    <property type="term" value="P:synapse organization"/>
    <property type="evidence" value="ECO:0000318"/>
    <property type="project" value="GO_Central"/>
</dbReference>
<dbReference type="CDD" id="cd05892">
    <property type="entry name" value="IgI_Myotilin_C"/>
    <property type="match status" value="1"/>
</dbReference>
<dbReference type="FunFam" id="2.60.40.10:FF:000694">
    <property type="entry name" value="Myotilin"/>
    <property type="match status" value="1"/>
</dbReference>
<dbReference type="FunFam" id="2.60.40.10:FF:000702">
    <property type="entry name" value="Myotilin"/>
    <property type="match status" value="1"/>
</dbReference>
<dbReference type="Gene3D" id="2.60.40.10">
    <property type="entry name" value="Immunoglobulins"/>
    <property type="match status" value="2"/>
</dbReference>
<dbReference type="InterPro" id="IPR007110">
    <property type="entry name" value="Ig-like_dom"/>
</dbReference>
<dbReference type="InterPro" id="IPR036179">
    <property type="entry name" value="Ig-like_dom_sf"/>
</dbReference>
<dbReference type="InterPro" id="IPR013783">
    <property type="entry name" value="Ig-like_fold"/>
</dbReference>
<dbReference type="InterPro" id="IPR013098">
    <property type="entry name" value="Ig_I-set"/>
</dbReference>
<dbReference type="InterPro" id="IPR003599">
    <property type="entry name" value="Ig_sub"/>
</dbReference>
<dbReference type="InterPro" id="IPR003598">
    <property type="entry name" value="Ig_sub2"/>
</dbReference>
<dbReference type="PANTHER" id="PTHR10075">
    <property type="entry name" value="BASIGIN RELATED"/>
    <property type="match status" value="1"/>
</dbReference>
<dbReference type="PANTHER" id="PTHR10075:SF23">
    <property type="entry name" value="MYOTILIN"/>
    <property type="match status" value="1"/>
</dbReference>
<dbReference type="Pfam" id="PF07679">
    <property type="entry name" value="I-set"/>
    <property type="match status" value="2"/>
</dbReference>
<dbReference type="SMART" id="SM00409">
    <property type="entry name" value="IG"/>
    <property type="match status" value="2"/>
</dbReference>
<dbReference type="SMART" id="SM00408">
    <property type="entry name" value="IGc2"/>
    <property type="match status" value="2"/>
</dbReference>
<dbReference type="SUPFAM" id="SSF48726">
    <property type="entry name" value="Immunoglobulin"/>
    <property type="match status" value="2"/>
</dbReference>
<dbReference type="PROSITE" id="PS50835">
    <property type="entry name" value="IG_LIKE"/>
    <property type="match status" value="2"/>
</dbReference>
<keyword id="KW-0002">3D-structure</keyword>
<keyword id="KW-0009">Actin-binding</keyword>
<keyword id="KW-0025">Alternative splicing</keyword>
<keyword id="KW-1003">Cell membrane</keyword>
<keyword id="KW-0963">Cytoplasm</keyword>
<keyword id="KW-0206">Cytoskeleton</keyword>
<keyword id="KW-0225">Disease variant</keyword>
<keyword id="KW-0393">Immunoglobulin domain</keyword>
<keyword id="KW-0947">Limb-girdle muscular dystrophy</keyword>
<keyword id="KW-0472">Membrane</keyword>
<keyword id="KW-0488">Methylation</keyword>
<keyword id="KW-0514">Muscle protein</keyword>
<keyword id="KW-1060">Myofibrillar myopathy</keyword>
<keyword id="KW-1267">Proteomics identification</keyword>
<keyword id="KW-1185">Reference proteome</keyword>
<keyword id="KW-0677">Repeat</keyword>
<evidence type="ECO:0000250" key="1">
    <source>
        <dbReference type="UniProtKB" id="Q9JIF9"/>
    </source>
</evidence>
<evidence type="ECO:0000256" key="2">
    <source>
        <dbReference type="SAM" id="MobiDB-lite"/>
    </source>
</evidence>
<evidence type="ECO:0000269" key="3">
    <source>
    </source>
</evidence>
<evidence type="ECO:0000269" key="4">
    <source>
    </source>
</evidence>
<evidence type="ECO:0000269" key="5">
    <source>
    </source>
</evidence>
<evidence type="ECO:0000269" key="6">
    <source>
    </source>
</evidence>
<evidence type="ECO:0000269" key="7">
    <source>
    </source>
</evidence>
<evidence type="ECO:0000269" key="8">
    <source>
    </source>
</evidence>
<evidence type="ECO:0000269" key="9">
    <source>
    </source>
</evidence>
<evidence type="ECO:0000269" key="10">
    <source>
    </source>
</evidence>
<evidence type="ECO:0000269" key="11">
    <source>
    </source>
</evidence>
<evidence type="ECO:0000269" key="12">
    <source>
    </source>
</evidence>
<evidence type="ECO:0000269" key="13">
    <source>
    </source>
</evidence>
<evidence type="ECO:0000269" key="14">
    <source>
    </source>
</evidence>
<evidence type="ECO:0000303" key="15">
    <source>
    </source>
</evidence>
<evidence type="ECO:0000305" key="16"/>
<evidence type="ECO:0007829" key="17">
    <source>
        <dbReference type="PDB" id="2KDG"/>
    </source>
</evidence>
<evidence type="ECO:0007829" key="18">
    <source>
        <dbReference type="PDB" id="2KKQ"/>
    </source>
</evidence>
<protein>
    <recommendedName>
        <fullName>Myotilin</fullName>
    </recommendedName>
    <alternativeName>
        <fullName>57 kDa cytoskeletal protein</fullName>
    </alternativeName>
    <alternativeName>
        <fullName>Myofibrillar titin-like Ig domains protein</fullName>
    </alternativeName>
    <alternativeName>
        <fullName>Titin immunoglobulin domain protein</fullName>
    </alternativeName>
</protein>
<organism>
    <name type="scientific">Homo sapiens</name>
    <name type="common">Human</name>
    <dbReference type="NCBI Taxonomy" id="9606"/>
    <lineage>
        <taxon>Eukaryota</taxon>
        <taxon>Metazoa</taxon>
        <taxon>Chordata</taxon>
        <taxon>Craniata</taxon>
        <taxon>Vertebrata</taxon>
        <taxon>Euteleostomi</taxon>
        <taxon>Mammalia</taxon>
        <taxon>Eutheria</taxon>
        <taxon>Euarchontoglires</taxon>
        <taxon>Primates</taxon>
        <taxon>Haplorrhini</taxon>
        <taxon>Catarrhini</taxon>
        <taxon>Hominidae</taxon>
        <taxon>Homo</taxon>
    </lineage>
</organism>
<proteinExistence type="evidence at protein level"/>
<feature type="chain" id="PRO_0000072687" description="Myotilin">
    <location>
        <begin position="1"/>
        <end position="498"/>
    </location>
</feature>
<feature type="domain" description="Ig-like C2-type 1">
    <location>
        <begin position="250"/>
        <end position="335"/>
    </location>
</feature>
<feature type="domain" description="Ig-like C2-type 2">
    <location>
        <begin position="349"/>
        <end position="441"/>
    </location>
</feature>
<feature type="region of interest" description="Disordered" evidence="2">
    <location>
        <begin position="1"/>
        <end position="46"/>
    </location>
</feature>
<feature type="region of interest" description="Disordered" evidence="2">
    <location>
        <begin position="64"/>
        <end position="151"/>
    </location>
</feature>
<feature type="region of interest" description="Necessary for interaction with ACTN1">
    <location>
        <begin position="79"/>
        <end position="150"/>
    </location>
</feature>
<feature type="region of interest" description="Disordered" evidence="2">
    <location>
        <begin position="202"/>
        <end position="241"/>
    </location>
</feature>
<feature type="region of interest" description="Necessary for interaction with ACTA1" evidence="8">
    <location>
        <begin position="215"/>
        <end position="498"/>
    </location>
</feature>
<feature type="region of interest" description="Necessary for interaction with FLNC">
    <location>
        <begin position="215"/>
        <end position="493"/>
    </location>
</feature>
<feature type="compositionally biased region" description="Low complexity" evidence="2">
    <location>
        <begin position="29"/>
        <end position="43"/>
    </location>
</feature>
<feature type="compositionally biased region" description="Polar residues" evidence="2">
    <location>
        <begin position="77"/>
        <end position="138"/>
    </location>
</feature>
<feature type="compositionally biased region" description="Low complexity" evidence="2">
    <location>
        <begin position="202"/>
        <end position="212"/>
    </location>
</feature>
<feature type="compositionally biased region" description="Polar residues" evidence="2">
    <location>
        <begin position="222"/>
        <end position="235"/>
    </location>
</feature>
<feature type="modified residue" description="Omega-N-methylarginine" evidence="1">
    <location>
        <position position="20"/>
    </location>
</feature>
<feature type="splice variant" id="VSP_041450" description="In isoform 2." evidence="15">
    <location>
        <begin position="1"/>
        <end position="184"/>
    </location>
</feature>
<feature type="sequence variant" id="VAR_035520" description="In a colorectal cancer sample; somatic mutation." evidence="13">
    <original>S</original>
    <variation>I</variation>
    <location>
        <position position="33"/>
    </location>
</feature>
<feature type="sequence variant" id="VAR_029532" description="In MFM3." evidence="12">
    <original>S</original>
    <variation>F</variation>
    <location>
        <position position="39"/>
    </location>
</feature>
<feature type="sequence variant" id="VAR_049914" description="In dbSNP:rs34717730.">
    <original>Q</original>
    <variation>R</variation>
    <location>
        <position position="50"/>
    </location>
</feature>
<feature type="sequence variant" id="VAR_021569" description="In MFM3." evidence="7 9 14">
    <original>S</original>
    <variation>F</variation>
    <location>
        <position position="55"/>
    </location>
</feature>
<feature type="sequence variant" id="VAR_021570" description="In MFM3; does not abolish interaction with ACTN1; dbSNP:rs28937597." evidence="5">
    <original>T</original>
    <variation>I</variation>
    <location>
        <position position="57"/>
    </location>
</feature>
<feature type="sequence variant" id="VAR_021571" description="In MFM3." evidence="9">
    <original>S</original>
    <variation>C</variation>
    <location>
        <position position="60"/>
    </location>
</feature>
<feature type="sequence variant" id="VAR_021572" description="In MFM3." evidence="9 14">
    <original>S</original>
    <variation>F</variation>
    <location>
        <position position="60"/>
    </location>
</feature>
<feature type="sequence variant" id="VAR_029533" description="In dbSNP:rs6890689." evidence="3 4 10">
    <original>K</original>
    <variation>Q</variation>
    <location>
        <position position="74"/>
    </location>
</feature>
<feature type="sequence variant" id="VAR_021573" description="In MFM3." evidence="9">
    <original>S</original>
    <variation>I</variation>
    <location>
        <position position="95"/>
    </location>
</feature>
<feature type="strand" evidence="17">
    <location>
        <begin position="249"/>
        <end position="251"/>
    </location>
</feature>
<feature type="strand" evidence="17">
    <location>
        <begin position="259"/>
        <end position="262"/>
    </location>
</feature>
<feature type="strand" evidence="17">
    <location>
        <begin position="267"/>
        <end position="272"/>
    </location>
</feature>
<feature type="strand" evidence="17">
    <location>
        <begin position="274"/>
        <end position="277"/>
    </location>
</feature>
<feature type="strand" evidence="17">
    <location>
        <begin position="280"/>
        <end position="285"/>
    </location>
</feature>
<feature type="strand" evidence="17">
    <location>
        <begin position="288"/>
        <end position="290"/>
    </location>
</feature>
<feature type="strand" evidence="17">
    <location>
        <begin position="294"/>
        <end position="296"/>
    </location>
</feature>
<feature type="strand" evidence="17">
    <location>
        <begin position="298"/>
        <end position="301"/>
    </location>
</feature>
<feature type="turn" evidence="17">
    <location>
        <begin position="302"/>
        <end position="304"/>
    </location>
</feature>
<feature type="strand" evidence="17">
    <location>
        <begin position="305"/>
        <end position="312"/>
    </location>
</feature>
<feature type="helix" evidence="17">
    <location>
        <begin position="315"/>
        <end position="317"/>
    </location>
</feature>
<feature type="strand" evidence="17">
    <location>
        <begin position="319"/>
        <end position="327"/>
    </location>
</feature>
<feature type="strand" evidence="17">
    <location>
        <begin position="330"/>
        <end position="341"/>
    </location>
</feature>
<feature type="strand" evidence="18">
    <location>
        <begin position="351"/>
        <end position="353"/>
    </location>
</feature>
<feature type="strand" evidence="18">
    <location>
        <begin position="358"/>
        <end position="361"/>
    </location>
</feature>
<feature type="strand" evidence="18">
    <location>
        <begin position="364"/>
        <end position="372"/>
    </location>
</feature>
<feature type="strand" evidence="18">
    <location>
        <begin position="379"/>
        <end position="384"/>
    </location>
</feature>
<feature type="strand" evidence="18">
    <location>
        <begin position="396"/>
        <end position="400"/>
    </location>
</feature>
<feature type="strand" evidence="18">
    <location>
        <begin position="405"/>
        <end position="413"/>
    </location>
</feature>
<feature type="helix" evidence="18">
    <location>
        <begin position="415"/>
        <end position="417"/>
    </location>
</feature>
<feature type="strand" evidence="18">
    <location>
        <begin position="419"/>
        <end position="427"/>
    </location>
</feature>
<feature type="strand" evidence="18">
    <location>
        <begin position="430"/>
        <end position="441"/>
    </location>
</feature>